<accession>Q9RW01</accession>
<sequence>MTKRALISVSDKTGVVEFAAQLQQRGWELLSTGGTFATLSGAGIPVRQVSDVTGFPEMLDGRVKTLHPAIHGGILARREAGHLGQLAAQDIGTIDLVCVNLYPFRETVARGAPDPEVIENIDIGGPAMIRSAAKNHDAVLVLVDPADYALALQDEVSPAERRRLAAKAYRHTSEYDAAITAYLSGESDELPTQLPEHLSLDLTRTAQVRYGENPHQPGAIYRWGNARGPVIDAQVVAGKPMSFNNYADADAAWSLCQELAAQEQGAVCVAVKHANPCGVAVAADVKTAWERARDADTLSVFGGVVAVSQPVDFGAAQSMKGTFLEVLIAPDVTPDAVEWFAAKKPDLRVLIAGQPQGVSVLDVRPLTGGFAVQERDARPWDDLCPEVVTERQPSEQEWADLRFAWAVVKGARSNAVALCKGGVTVGLGAGAVSRIWAAERAIANAGEAAQGAVLASEAFFPFDDVVRLAASAGVTAVLQPGGAKRDPEVIAACNELGISMVFTGSRHFRH</sequence>
<proteinExistence type="inferred from homology"/>
<feature type="chain" id="PRO_0000192090" description="Bifunctional purine biosynthesis protein PurH">
    <location>
        <begin position="1"/>
        <end position="510"/>
    </location>
</feature>
<feature type="domain" description="MGS-like" evidence="2">
    <location>
        <begin position="1"/>
        <end position="143"/>
    </location>
</feature>
<name>PUR9_DEIRA</name>
<reference key="1">
    <citation type="journal article" date="1999" name="Science">
        <title>Genome sequence of the radioresistant bacterium Deinococcus radiodurans R1.</title>
        <authorList>
            <person name="White O."/>
            <person name="Eisen J.A."/>
            <person name="Heidelberg J.F."/>
            <person name="Hickey E.K."/>
            <person name="Peterson J.D."/>
            <person name="Dodson R.J."/>
            <person name="Haft D.H."/>
            <person name="Gwinn M.L."/>
            <person name="Nelson W.C."/>
            <person name="Richardson D.L."/>
            <person name="Moffat K.S."/>
            <person name="Qin H."/>
            <person name="Jiang L."/>
            <person name="Pamphile W."/>
            <person name="Crosby M."/>
            <person name="Shen M."/>
            <person name="Vamathevan J.J."/>
            <person name="Lam P."/>
            <person name="McDonald L.A."/>
            <person name="Utterback T.R."/>
            <person name="Zalewski C."/>
            <person name="Makarova K.S."/>
            <person name="Aravind L."/>
            <person name="Daly M.J."/>
            <person name="Minton K.W."/>
            <person name="Fleischmann R.D."/>
            <person name="Ketchum K.A."/>
            <person name="Nelson K.E."/>
            <person name="Salzberg S.L."/>
            <person name="Smith H.O."/>
            <person name="Venter J.C."/>
            <person name="Fraser C.M."/>
        </authorList>
    </citation>
    <scope>NUCLEOTIDE SEQUENCE [LARGE SCALE GENOMIC DNA]</scope>
    <source>
        <strain>ATCC 13939 / DSM 20539 / JCM 16871 / CCUG 27074 / LMG 4051 / NBRC 15346 / NCIMB 9279 / VKM B-1422 / R1</strain>
    </source>
</reference>
<evidence type="ECO:0000255" key="1">
    <source>
        <dbReference type="HAMAP-Rule" id="MF_00139"/>
    </source>
</evidence>
<evidence type="ECO:0000255" key="2">
    <source>
        <dbReference type="PROSITE-ProRule" id="PRU01202"/>
    </source>
</evidence>
<evidence type="ECO:0000305" key="3"/>
<gene>
    <name evidence="1" type="primary">purH</name>
    <name type="ordered locus">DR_0868</name>
</gene>
<dbReference type="EC" id="2.1.2.3" evidence="1"/>
<dbReference type="EC" id="3.5.4.10" evidence="1"/>
<dbReference type="EMBL" id="AE000513">
    <property type="protein sequence ID" value="AAF10444.1"/>
    <property type="status" value="ALT_INIT"/>
    <property type="molecule type" value="Genomic_DNA"/>
</dbReference>
<dbReference type="PIR" id="B75467">
    <property type="entry name" value="B75467"/>
</dbReference>
<dbReference type="RefSeq" id="NP_294592.1">
    <property type="nucleotide sequence ID" value="NC_001263.1"/>
</dbReference>
<dbReference type="RefSeq" id="WP_027479694.1">
    <property type="nucleotide sequence ID" value="NC_001263.1"/>
</dbReference>
<dbReference type="SMR" id="Q9RW01"/>
<dbReference type="FunCoup" id="Q9RW01">
    <property type="interactions" value="457"/>
</dbReference>
<dbReference type="STRING" id="243230.DR_0868"/>
<dbReference type="PaxDb" id="243230-DR_0868"/>
<dbReference type="EnsemblBacteria" id="AAF10444">
    <property type="protein sequence ID" value="AAF10444"/>
    <property type="gene ID" value="DR_0868"/>
</dbReference>
<dbReference type="GeneID" id="69517114"/>
<dbReference type="KEGG" id="dra:DR_0868"/>
<dbReference type="PATRIC" id="fig|243230.17.peg.1052"/>
<dbReference type="eggNOG" id="COG0138">
    <property type="taxonomic scope" value="Bacteria"/>
</dbReference>
<dbReference type="HOGENOM" id="CLU_016316_5_2_0"/>
<dbReference type="InParanoid" id="Q9RW01"/>
<dbReference type="OrthoDB" id="9802065at2"/>
<dbReference type="UniPathway" id="UPA00074">
    <property type="reaction ID" value="UER00133"/>
</dbReference>
<dbReference type="UniPathway" id="UPA00074">
    <property type="reaction ID" value="UER00135"/>
</dbReference>
<dbReference type="Proteomes" id="UP000002524">
    <property type="component" value="Chromosome 1"/>
</dbReference>
<dbReference type="GO" id="GO:0005829">
    <property type="term" value="C:cytosol"/>
    <property type="evidence" value="ECO:0000318"/>
    <property type="project" value="GO_Central"/>
</dbReference>
<dbReference type="GO" id="GO:0003937">
    <property type="term" value="F:IMP cyclohydrolase activity"/>
    <property type="evidence" value="ECO:0000318"/>
    <property type="project" value="GO_Central"/>
</dbReference>
<dbReference type="GO" id="GO:0004643">
    <property type="term" value="F:phosphoribosylaminoimidazolecarboxamide formyltransferase activity"/>
    <property type="evidence" value="ECO:0000318"/>
    <property type="project" value="GO_Central"/>
</dbReference>
<dbReference type="GO" id="GO:0006189">
    <property type="term" value="P:'de novo' IMP biosynthetic process"/>
    <property type="evidence" value="ECO:0000318"/>
    <property type="project" value="GO_Central"/>
</dbReference>
<dbReference type="CDD" id="cd01421">
    <property type="entry name" value="IMPCH"/>
    <property type="match status" value="1"/>
</dbReference>
<dbReference type="FunFam" id="3.40.140.20:FF:000001">
    <property type="entry name" value="Bifunctional purine biosynthesis protein PurH"/>
    <property type="match status" value="1"/>
</dbReference>
<dbReference type="FunFam" id="3.40.50.1380:FF:000001">
    <property type="entry name" value="Bifunctional purine biosynthesis protein PurH"/>
    <property type="match status" value="1"/>
</dbReference>
<dbReference type="Gene3D" id="3.40.140.20">
    <property type="match status" value="2"/>
</dbReference>
<dbReference type="Gene3D" id="3.40.50.1380">
    <property type="entry name" value="Methylglyoxal synthase-like domain"/>
    <property type="match status" value="1"/>
</dbReference>
<dbReference type="HAMAP" id="MF_00139">
    <property type="entry name" value="PurH"/>
    <property type="match status" value="1"/>
</dbReference>
<dbReference type="InterPro" id="IPR024051">
    <property type="entry name" value="AICAR_Tfase_dup_dom_sf"/>
</dbReference>
<dbReference type="InterPro" id="IPR016193">
    <property type="entry name" value="Cytidine_deaminase-like"/>
</dbReference>
<dbReference type="InterPro" id="IPR011607">
    <property type="entry name" value="MGS-like_dom"/>
</dbReference>
<dbReference type="InterPro" id="IPR036914">
    <property type="entry name" value="MGS-like_dom_sf"/>
</dbReference>
<dbReference type="InterPro" id="IPR002695">
    <property type="entry name" value="PurH-like"/>
</dbReference>
<dbReference type="NCBIfam" id="NF002049">
    <property type="entry name" value="PRK00881.1"/>
    <property type="match status" value="1"/>
</dbReference>
<dbReference type="NCBIfam" id="TIGR00355">
    <property type="entry name" value="purH"/>
    <property type="match status" value="1"/>
</dbReference>
<dbReference type="PANTHER" id="PTHR11692:SF0">
    <property type="entry name" value="BIFUNCTIONAL PURINE BIOSYNTHESIS PROTEIN ATIC"/>
    <property type="match status" value="1"/>
</dbReference>
<dbReference type="PANTHER" id="PTHR11692">
    <property type="entry name" value="BIFUNCTIONAL PURINE BIOSYNTHESIS PROTEIN PURH"/>
    <property type="match status" value="1"/>
</dbReference>
<dbReference type="Pfam" id="PF01808">
    <property type="entry name" value="AICARFT_IMPCHas"/>
    <property type="match status" value="1"/>
</dbReference>
<dbReference type="Pfam" id="PF02142">
    <property type="entry name" value="MGS"/>
    <property type="match status" value="1"/>
</dbReference>
<dbReference type="PIRSF" id="PIRSF000414">
    <property type="entry name" value="AICARFT_IMPCHas"/>
    <property type="match status" value="1"/>
</dbReference>
<dbReference type="SMART" id="SM00798">
    <property type="entry name" value="AICARFT_IMPCHas"/>
    <property type="match status" value="1"/>
</dbReference>
<dbReference type="SMART" id="SM00851">
    <property type="entry name" value="MGS"/>
    <property type="match status" value="1"/>
</dbReference>
<dbReference type="SUPFAM" id="SSF53927">
    <property type="entry name" value="Cytidine deaminase-like"/>
    <property type="match status" value="1"/>
</dbReference>
<dbReference type="SUPFAM" id="SSF52335">
    <property type="entry name" value="Methylglyoxal synthase-like"/>
    <property type="match status" value="1"/>
</dbReference>
<dbReference type="PROSITE" id="PS51855">
    <property type="entry name" value="MGS"/>
    <property type="match status" value="1"/>
</dbReference>
<keyword id="KW-0378">Hydrolase</keyword>
<keyword id="KW-0511">Multifunctional enzyme</keyword>
<keyword id="KW-0658">Purine biosynthesis</keyword>
<keyword id="KW-1185">Reference proteome</keyword>
<keyword id="KW-0808">Transferase</keyword>
<comment type="catalytic activity">
    <reaction evidence="1">
        <text>(6R)-10-formyltetrahydrofolate + 5-amino-1-(5-phospho-beta-D-ribosyl)imidazole-4-carboxamide = 5-formamido-1-(5-phospho-D-ribosyl)imidazole-4-carboxamide + (6S)-5,6,7,8-tetrahydrofolate</text>
        <dbReference type="Rhea" id="RHEA:22192"/>
        <dbReference type="ChEBI" id="CHEBI:57453"/>
        <dbReference type="ChEBI" id="CHEBI:58467"/>
        <dbReference type="ChEBI" id="CHEBI:58475"/>
        <dbReference type="ChEBI" id="CHEBI:195366"/>
        <dbReference type="EC" id="2.1.2.3"/>
    </reaction>
</comment>
<comment type="catalytic activity">
    <reaction evidence="1">
        <text>IMP + H2O = 5-formamido-1-(5-phospho-D-ribosyl)imidazole-4-carboxamide</text>
        <dbReference type="Rhea" id="RHEA:18445"/>
        <dbReference type="ChEBI" id="CHEBI:15377"/>
        <dbReference type="ChEBI" id="CHEBI:58053"/>
        <dbReference type="ChEBI" id="CHEBI:58467"/>
        <dbReference type="EC" id="3.5.4.10"/>
    </reaction>
</comment>
<comment type="pathway">
    <text evidence="1">Purine metabolism; IMP biosynthesis via de novo pathway; 5-formamido-1-(5-phospho-D-ribosyl)imidazole-4-carboxamide from 5-amino-1-(5-phospho-D-ribosyl)imidazole-4-carboxamide (10-formyl THF route): step 1/1.</text>
</comment>
<comment type="pathway">
    <text evidence="1">Purine metabolism; IMP biosynthesis via de novo pathway; IMP from 5-formamido-1-(5-phospho-D-ribosyl)imidazole-4-carboxamide: step 1/1.</text>
</comment>
<comment type="domain">
    <text evidence="1">The IMP cyclohydrolase activity resides in the N-terminal region.</text>
</comment>
<comment type="similarity">
    <text evidence="1">Belongs to the PurH family.</text>
</comment>
<comment type="sequence caution" evidence="3">
    <conflict type="erroneous initiation">
        <sequence resource="EMBL-CDS" id="AAF10444"/>
    </conflict>
</comment>
<organism>
    <name type="scientific">Deinococcus radiodurans (strain ATCC 13939 / DSM 20539 / JCM 16871 / CCUG 27074 / LMG 4051 / NBRC 15346 / NCIMB 9279 / VKM B-1422 / R1)</name>
    <dbReference type="NCBI Taxonomy" id="243230"/>
    <lineage>
        <taxon>Bacteria</taxon>
        <taxon>Thermotogati</taxon>
        <taxon>Deinococcota</taxon>
        <taxon>Deinococci</taxon>
        <taxon>Deinococcales</taxon>
        <taxon>Deinococcaceae</taxon>
        <taxon>Deinococcus</taxon>
    </lineage>
</organism>
<protein>
    <recommendedName>
        <fullName evidence="1">Bifunctional purine biosynthesis protein PurH</fullName>
    </recommendedName>
    <domain>
        <recommendedName>
            <fullName evidence="1">Phosphoribosylaminoimidazolecarboxamide formyltransferase</fullName>
            <ecNumber evidence="1">2.1.2.3</ecNumber>
        </recommendedName>
        <alternativeName>
            <fullName evidence="1">AICAR transformylase</fullName>
        </alternativeName>
    </domain>
    <domain>
        <recommendedName>
            <fullName evidence="1">IMP cyclohydrolase</fullName>
            <ecNumber evidence="1">3.5.4.10</ecNumber>
        </recommendedName>
        <alternativeName>
            <fullName evidence="1">ATIC</fullName>
        </alternativeName>
        <alternativeName>
            <fullName evidence="1">IMP synthase</fullName>
        </alternativeName>
        <alternativeName>
            <fullName evidence="1">Inosinicase</fullName>
        </alternativeName>
    </domain>
</protein>